<keyword id="KW-0113">Calvin cycle</keyword>
<keyword id="KW-0120">Carbon dioxide fixation</keyword>
<keyword id="KW-0150">Chloroplast</keyword>
<keyword id="KW-1015">Disulfide bond</keyword>
<keyword id="KW-0456">Lyase</keyword>
<keyword id="KW-0460">Magnesium</keyword>
<keyword id="KW-0479">Metal-binding</keyword>
<keyword id="KW-0488">Methylation</keyword>
<keyword id="KW-0503">Monooxygenase</keyword>
<keyword id="KW-0560">Oxidoreductase</keyword>
<keyword id="KW-0601">Photorespiration</keyword>
<keyword id="KW-0602">Photosynthesis</keyword>
<keyword id="KW-0934">Plastid</keyword>
<organism>
    <name type="scientific">Nicandra physalodes</name>
    <name type="common">Apple-of-Peru</name>
    <name type="synonym">Atropa physalodes</name>
    <dbReference type="NCBI Taxonomy" id="33118"/>
    <lineage>
        <taxon>Eukaryota</taxon>
        <taxon>Viridiplantae</taxon>
        <taxon>Streptophyta</taxon>
        <taxon>Embryophyta</taxon>
        <taxon>Tracheophyta</taxon>
        <taxon>Spermatophyta</taxon>
        <taxon>Magnoliopsida</taxon>
        <taxon>eudicotyledons</taxon>
        <taxon>Gunneridae</taxon>
        <taxon>Pentapetalae</taxon>
        <taxon>asterids</taxon>
        <taxon>lamiids</taxon>
        <taxon>Solanales</taxon>
        <taxon>Solanaceae</taxon>
        <taxon>Solanoideae</taxon>
        <taxon>Nicandreae</taxon>
        <taxon>Nicandra</taxon>
    </lineage>
</organism>
<proteinExistence type="inferred from homology"/>
<protein>
    <recommendedName>
        <fullName evidence="1">Ribulose bisphosphate carboxylase large chain</fullName>
        <shortName evidence="1">RuBisCO large subunit</shortName>
        <ecNumber evidence="1">4.1.1.39</ecNumber>
    </recommendedName>
</protein>
<gene>
    <name evidence="1" type="primary">rbcL</name>
</gene>
<name>RBL_NICPH</name>
<accession>Q32686</accession>
<geneLocation type="chloroplast"/>
<reference key="1">
    <citation type="journal article" date="1994" name="Syst. Biol.">
        <title>Combining data in phylogenetic systematics: an empirical approach using three molecular data sets in the Solanaceae.</title>
        <authorList>
            <person name="Olmstead R.G."/>
            <person name="Sweere J.A."/>
        </authorList>
    </citation>
    <scope>NUCLEOTIDE SEQUENCE [GENOMIC DNA]</scope>
</reference>
<evidence type="ECO:0000255" key="1">
    <source>
        <dbReference type="HAMAP-Rule" id="MF_01338"/>
    </source>
</evidence>
<comment type="function">
    <text evidence="1">RuBisCO catalyzes two reactions: the carboxylation of D-ribulose 1,5-bisphosphate, the primary event in carbon dioxide fixation, as well as the oxidative fragmentation of the pentose substrate in the photorespiration process. Both reactions occur simultaneously and in competition at the same active site.</text>
</comment>
<comment type="catalytic activity">
    <reaction evidence="1">
        <text>2 (2R)-3-phosphoglycerate + 2 H(+) = D-ribulose 1,5-bisphosphate + CO2 + H2O</text>
        <dbReference type="Rhea" id="RHEA:23124"/>
        <dbReference type="ChEBI" id="CHEBI:15377"/>
        <dbReference type="ChEBI" id="CHEBI:15378"/>
        <dbReference type="ChEBI" id="CHEBI:16526"/>
        <dbReference type="ChEBI" id="CHEBI:57870"/>
        <dbReference type="ChEBI" id="CHEBI:58272"/>
        <dbReference type="EC" id="4.1.1.39"/>
    </reaction>
</comment>
<comment type="catalytic activity">
    <reaction evidence="1">
        <text>D-ribulose 1,5-bisphosphate + O2 = 2-phosphoglycolate + (2R)-3-phosphoglycerate + 2 H(+)</text>
        <dbReference type="Rhea" id="RHEA:36631"/>
        <dbReference type="ChEBI" id="CHEBI:15378"/>
        <dbReference type="ChEBI" id="CHEBI:15379"/>
        <dbReference type="ChEBI" id="CHEBI:57870"/>
        <dbReference type="ChEBI" id="CHEBI:58033"/>
        <dbReference type="ChEBI" id="CHEBI:58272"/>
    </reaction>
</comment>
<comment type="cofactor">
    <cofactor evidence="1">
        <name>Mg(2+)</name>
        <dbReference type="ChEBI" id="CHEBI:18420"/>
    </cofactor>
    <text evidence="1">Binds 1 Mg(2+) ion per subunit.</text>
</comment>
<comment type="subunit">
    <text evidence="1">Heterohexadecamer of 8 large chains and 8 small chains; disulfide-linked. The disulfide link is formed within the large subunit homodimers.</text>
</comment>
<comment type="subcellular location">
    <subcellularLocation>
        <location>Plastid</location>
        <location>Chloroplast</location>
    </subcellularLocation>
</comment>
<comment type="PTM">
    <text evidence="1">The disulfide bond which can form in the large chain dimeric partners within the hexadecamer appears to be associated with oxidative stress and protein turnover.</text>
</comment>
<comment type="miscellaneous">
    <text evidence="1">The basic functional RuBisCO is composed of a large chain homodimer in a 'head-to-tail' conformation. In form I RuBisCO this homodimer is arranged in a barrel-like tetramer with the small subunits forming a tetrameric 'cap' on each end of the 'barrel'.</text>
</comment>
<comment type="similarity">
    <text evidence="1">Belongs to the RuBisCO large chain family. Type I subfamily.</text>
</comment>
<dbReference type="EC" id="4.1.1.39" evidence="1"/>
<dbReference type="EMBL" id="U08615">
    <property type="protein sequence ID" value="AAA18390.1"/>
    <property type="molecule type" value="Genomic_DNA"/>
</dbReference>
<dbReference type="SMR" id="Q32686"/>
<dbReference type="GO" id="GO:0009507">
    <property type="term" value="C:chloroplast"/>
    <property type="evidence" value="ECO:0007669"/>
    <property type="project" value="UniProtKB-SubCell"/>
</dbReference>
<dbReference type="GO" id="GO:0000287">
    <property type="term" value="F:magnesium ion binding"/>
    <property type="evidence" value="ECO:0007669"/>
    <property type="project" value="InterPro"/>
</dbReference>
<dbReference type="GO" id="GO:0004497">
    <property type="term" value="F:monooxygenase activity"/>
    <property type="evidence" value="ECO:0007669"/>
    <property type="project" value="UniProtKB-KW"/>
</dbReference>
<dbReference type="GO" id="GO:0016984">
    <property type="term" value="F:ribulose-bisphosphate carboxylase activity"/>
    <property type="evidence" value="ECO:0007669"/>
    <property type="project" value="UniProtKB-EC"/>
</dbReference>
<dbReference type="GO" id="GO:0009853">
    <property type="term" value="P:photorespiration"/>
    <property type="evidence" value="ECO:0007669"/>
    <property type="project" value="UniProtKB-KW"/>
</dbReference>
<dbReference type="GO" id="GO:0019253">
    <property type="term" value="P:reductive pentose-phosphate cycle"/>
    <property type="evidence" value="ECO:0007669"/>
    <property type="project" value="UniProtKB-KW"/>
</dbReference>
<dbReference type="CDD" id="cd08212">
    <property type="entry name" value="RuBisCO_large_I"/>
    <property type="match status" value="1"/>
</dbReference>
<dbReference type="FunFam" id="3.20.20.110:FF:000001">
    <property type="entry name" value="Ribulose bisphosphate carboxylase large chain"/>
    <property type="match status" value="1"/>
</dbReference>
<dbReference type="FunFam" id="3.30.70.150:FF:000001">
    <property type="entry name" value="Ribulose bisphosphate carboxylase large chain"/>
    <property type="match status" value="1"/>
</dbReference>
<dbReference type="Gene3D" id="3.20.20.110">
    <property type="entry name" value="Ribulose bisphosphate carboxylase, large subunit, C-terminal domain"/>
    <property type="match status" value="1"/>
</dbReference>
<dbReference type="Gene3D" id="3.30.70.150">
    <property type="entry name" value="RuBisCO large subunit, N-terminal domain"/>
    <property type="match status" value="1"/>
</dbReference>
<dbReference type="HAMAP" id="MF_01338">
    <property type="entry name" value="RuBisCO_L_type1"/>
    <property type="match status" value="1"/>
</dbReference>
<dbReference type="InterPro" id="IPR033966">
    <property type="entry name" value="RuBisCO"/>
</dbReference>
<dbReference type="InterPro" id="IPR020878">
    <property type="entry name" value="RuBisCo_large_chain_AS"/>
</dbReference>
<dbReference type="InterPro" id="IPR000685">
    <property type="entry name" value="RuBisCO_lsu_C"/>
</dbReference>
<dbReference type="InterPro" id="IPR036376">
    <property type="entry name" value="RuBisCO_lsu_C_sf"/>
</dbReference>
<dbReference type="InterPro" id="IPR017443">
    <property type="entry name" value="RuBisCO_lsu_fd_N"/>
</dbReference>
<dbReference type="InterPro" id="IPR036422">
    <property type="entry name" value="RuBisCO_lsu_N_sf"/>
</dbReference>
<dbReference type="InterPro" id="IPR020888">
    <property type="entry name" value="RuBisCO_lsuI"/>
</dbReference>
<dbReference type="NCBIfam" id="NF003252">
    <property type="entry name" value="PRK04208.1"/>
    <property type="match status" value="1"/>
</dbReference>
<dbReference type="PANTHER" id="PTHR42704">
    <property type="entry name" value="RIBULOSE BISPHOSPHATE CARBOXYLASE"/>
    <property type="match status" value="1"/>
</dbReference>
<dbReference type="PANTHER" id="PTHR42704:SF16">
    <property type="entry name" value="RIBULOSE BISPHOSPHATE CARBOXYLASE LARGE CHAIN"/>
    <property type="match status" value="1"/>
</dbReference>
<dbReference type="Pfam" id="PF00016">
    <property type="entry name" value="RuBisCO_large"/>
    <property type="match status" value="1"/>
</dbReference>
<dbReference type="Pfam" id="PF02788">
    <property type="entry name" value="RuBisCO_large_N"/>
    <property type="match status" value="1"/>
</dbReference>
<dbReference type="SFLD" id="SFLDG01052">
    <property type="entry name" value="RuBisCO"/>
    <property type="match status" value="1"/>
</dbReference>
<dbReference type="SFLD" id="SFLDS00014">
    <property type="entry name" value="RuBisCO"/>
    <property type="match status" value="1"/>
</dbReference>
<dbReference type="SFLD" id="SFLDG00301">
    <property type="entry name" value="RuBisCO-like_proteins"/>
    <property type="match status" value="1"/>
</dbReference>
<dbReference type="SUPFAM" id="SSF51649">
    <property type="entry name" value="RuBisCo, C-terminal domain"/>
    <property type="match status" value="1"/>
</dbReference>
<dbReference type="SUPFAM" id="SSF54966">
    <property type="entry name" value="RuBisCO, large subunit, small (N-terminal) domain"/>
    <property type="match status" value="1"/>
</dbReference>
<dbReference type="PROSITE" id="PS00157">
    <property type="entry name" value="RUBISCO_LARGE"/>
    <property type="match status" value="1"/>
</dbReference>
<sequence>SVGFKAGVKEYKLTYYTPEYKTKDTDILAAFRVTPQPGVPPEEAGAAVAAESSTGTWTTVWTDGLTSLDRYKGRCYRIERVVGEKDQYIAYVAYPLDLFEEGSVTNMFTSIVGNVFGFKALRALRLEDLRIPPAYVKTFQGPPHGIQVERDKLNKYGRPLLGCTIKPKLGLSAKNYGRAVYECLRGGLDFTKDDENVNSQPFMRWRDRFLFCAEALFKAQAETGEIKGHYLNATAGTCEEMIKRAVFARELGVPIVMHDYLTGGFTANTTLAHYCRDNGLLLHIHRAMHAVIDRQKNHGIHFRVLAKALRMSGGDHIHSGTVVGKLEGERDITLGFVDLLRDDFVEQDRSRGIYFTQDWVSLPGVLPVASGGIHVWHMPALTEIFGDDSVLQFGGGTLGHPWGNAPGAVANRVALEACVKARNEGRDLAQEGNEVIREACKWSPELAAACEVWKEIVFNFAAVDILDNK</sequence>
<feature type="chain" id="PRO_0000062540" description="Ribulose bisphosphate carboxylase large chain">
    <location>
        <begin position="1" status="less than"/>
        <end position="469"/>
    </location>
</feature>
<feature type="active site" description="Proton acceptor" evidence="1">
    <location>
        <position position="166"/>
    </location>
</feature>
<feature type="active site" description="Proton acceptor" evidence="1">
    <location>
        <position position="285"/>
    </location>
</feature>
<feature type="binding site" description="in homodimeric partner" evidence="1">
    <location>
        <position position="114"/>
    </location>
    <ligand>
        <name>substrate</name>
    </ligand>
</feature>
<feature type="binding site" evidence="1">
    <location>
        <position position="164"/>
    </location>
    <ligand>
        <name>substrate</name>
    </ligand>
</feature>
<feature type="binding site" evidence="1">
    <location>
        <position position="168"/>
    </location>
    <ligand>
        <name>substrate</name>
    </ligand>
</feature>
<feature type="binding site" description="via carbamate group" evidence="1">
    <location>
        <position position="192"/>
    </location>
    <ligand>
        <name>Mg(2+)</name>
        <dbReference type="ChEBI" id="CHEBI:18420"/>
    </ligand>
</feature>
<feature type="binding site" evidence="1">
    <location>
        <position position="194"/>
    </location>
    <ligand>
        <name>Mg(2+)</name>
        <dbReference type="ChEBI" id="CHEBI:18420"/>
    </ligand>
</feature>
<feature type="binding site" evidence="1">
    <location>
        <position position="195"/>
    </location>
    <ligand>
        <name>Mg(2+)</name>
        <dbReference type="ChEBI" id="CHEBI:18420"/>
    </ligand>
</feature>
<feature type="binding site" evidence="1">
    <location>
        <position position="286"/>
    </location>
    <ligand>
        <name>substrate</name>
    </ligand>
</feature>
<feature type="binding site" evidence="1">
    <location>
        <position position="318"/>
    </location>
    <ligand>
        <name>substrate</name>
    </ligand>
</feature>
<feature type="binding site" evidence="1">
    <location>
        <position position="370"/>
    </location>
    <ligand>
        <name>substrate</name>
    </ligand>
</feature>
<feature type="site" description="Transition state stabilizer" evidence="1">
    <location>
        <position position="325"/>
    </location>
</feature>
<feature type="modified residue" description="N6,N6,N6-trimethyllysine" evidence="1">
    <location>
        <position position="5"/>
    </location>
</feature>
<feature type="modified residue" description="N6-carboxylysine" evidence="1">
    <location>
        <position position="192"/>
    </location>
</feature>
<feature type="disulfide bond" description="Interchain; in linked form" evidence="1">
    <location>
        <position position="238"/>
    </location>
</feature>
<feature type="non-terminal residue">
    <location>
        <position position="1"/>
    </location>
</feature>